<accession>B2SRH1</accession>
<gene>
    <name evidence="1" type="primary">minE</name>
    <name type="ordered locus">PXO_04465</name>
</gene>
<reference key="1">
    <citation type="journal article" date="2008" name="BMC Genomics">
        <title>Genome sequence and rapid evolution of the rice pathogen Xanthomonas oryzae pv. oryzae PXO99A.</title>
        <authorList>
            <person name="Salzberg S.L."/>
            <person name="Sommer D.D."/>
            <person name="Schatz M.C."/>
            <person name="Phillippy A.M."/>
            <person name="Rabinowicz P.D."/>
            <person name="Tsuge S."/>
            <person name="Furutani A."/>
            <person name="Ochiai H."/>
            <person name="Delcher A.L."/>
            <person name="Kelley D."/>
            <person name="Madupu R."/>
            <person name="Puiu D."/>
            <person name="Radune D."/>
            <person name="Shumway M."/>
            <person name="Trapnell C."/>
            <person name="Aparna G."/>
            <person name="Jha G."/>
            <person name="Pandey A."/>
            <person name="Patil P.B."/>
            <person name="Ishihara H."/>
            <person name="Meyer D.F."/>
            <person name="Szurek B."/>
            <person name="Verdier V."/>
            <person name="Koebnik R."/>
            <person name="Dow J.M."/>
            <person name="Ryan R.P."/>
            <person name="Hirata H."/>
            <person name="Tsuyumu S."/>
            <person name="Won Lee S."/>
            <person name="Seo Y.-S."/>
            <person name="Sriariyanum M."/>
            <person name="Ronald P.C."/>
            <person name="Sonti R.V."/>
            <person name="Van Sluys M.-A."/>
            <person name="Leach J.E."/>
            <person name="White F.F."/>
            <person name="Bogdanove A.J."/>
        </authorList>
    </citation>
    <scope>NUCLEOTIDE SEQUENCE [LARGE SCALE GENOMIC DNA]</scope>
    <source>
        <strain>PXO99A</strain>
    </source>
</reference>
<evidence type="ECO:0000255" key="1">
    <source>
        <dbReference type="HAMAP-Rule" id="MF_00262"/>
    </source>
</evidence>
<keyword id="KW-0131">Cell cycle</keyword>
<keyword id="KW-0132">Cell division</keyword>
<name>MINE_XANOP</name>
<organism>
    <name type="scientific">Xanthomonas oryzae pv. oryzae (strain PXO99A)</name>
    <dbReference type="NCBI Taxonomy" id="360094"/>
    <lineage>
        <taxon>Bacteria</taxon>
        <taxon>Pseudomonadati</taxon>
        <taxon>Pseudomonadota</taxon>
        <taxon>Gammaproteobacteria</taxon>
        <taxon>Lysobacterales</taxon>
        <taxon>Lysobacteraceae</taxon>
        <taxon>Xanthomonas</taxon>
    </lineage>
</organism>
<dbReference type="EMBL" id="CP000967">
    <property type="protein sequence ID" value="ACD57940.1"/>
    <property type="molecule type" value="Genomic_DNA"/>
</dbReference>
<dbReference type="RefSeq" id="WP_003484370.1">
    <property type="nucleotide sequence ID" value="NC_010717.2"/>
</dbReference>
<dbReference type="SMR" id="B2SRH1"/>
<dbReference type="GeneID" id="97509569"/>
<dbReference type="KEGG" id="xop:PXO_04465"/>
<dbReference type="eggNOG" id="COG0851">
    <property type="taxonomic scope" value="Bacteria"/>
</dbReference>
<dbReference type="HOGENOM" id="CLU_137929_2_1_6"/>
<dbReference type="PHI-base" id="PHI:123441"/>
<dbReference type="Proteomes" id="UP000001740">
    <property type="component" value="Chromosome"/>
</dbReference>
<dbReference type="GO" id="GO:0051301">
    <property type="term" value="P:cell division"/>
    <property type="evidence" value="ECO:0007669"/>
    <property type="project" value="UniProtKB-KW"/>
</dbReference>
<dbReference type="GO" id="GO:0032955">
    <property type="term" value="P:regulation of division septum assembly"/>
    <property type="evidence" value="ECO:0007669"/>
    <property type="project" value="InterPro"/>
</dbReference>
<dbReference type="FunFam" id="3.30.1070.10:FF:000001">
    <property type="entry name" value="Cell division topological specificity factor"/>
    <property type="match status" value="1"/>
</dbReference>
<dbReference type="Gene3D" id="3.30.1070.10">
    <property type="entry name" value="Cell division topological specificity factor MinE"/>
    <property type="match status" value="1"/>
</dbReference>
<dbReference type="HAMAP" id="MF_00262">
    <property type="entry name" value="MinE"/>
    <property type="match status" value="1"/>
</dbReference>
<dbReference type="InterPro" id="IPR005527">
    <property type="entry name" value="MinE"/>
</dbReference>
<dbReference type="InterPro" id="IPR036707">
    <property type="entry name" value="MinE_sf"/>
</dbReference>
<dbReference type="NCBIfam" id="TIGR01215">
    <property type="entry name" value="minE"/>
    <property type="match status" value="1"/>
</dbReference>
<dbReference type="NCBIfam" id="NF001422">
    <property type="entry name" value="PRK00296.1"/>
    <property type="match status" value="1"/>
</dbReference>
<dbReference type="Pfam" id="PF03776">
    <property type="entry name" value="MinE"/>
    <property type="match status" value="1"/>
</dbReference>
<dbReference type="SUPFAM" id="SSF55229">
    <property type="entry name" value="Cell division protein MinE topological specificity domain"/>
    <property type="match status" value="1"/>
</dbReference>
<proteinExistence type="inferred from homology"/>
<feature type="chain" id="PRO_1000114253" description="Cell division topological specificity factor">
    <location>
        <begin position="1"/>
        <end position="85"/>
    </location>
</feature>
<sequence>MGLLDFLKSKKNTAETAKNRLQIIIAQERNHRGGPDYLPLMQRELLEVIKKYVNIDADAVRVDLVKDGEHDVLDISVALPEDGDK</sequence>
<protein>
    <recommendedName>
        <fullName evidence="1">Cell division topological specificity factor</fullName>
    </recommendedName>
</protein>
<comment type="function">
    <text evidence="1">Prevents the cell division inhibition by proteins MinC and MinD at internal division sites while permitting inhibition at polar sites. This ensures cell division at the proper site by restricting the formation of a division septum at the midpoint of the long axis of the cell.</text>
</comment>
<comment type="similarity">
    <text evidence="1">Belongs to the MinE family.</text>
</comment>